<proteinExistence type="inferred from homology"/>
<gene>
    <name evidence="1" type="primary">rpoZ</name>
    <name type="ordered locus">BamMC406_0872</name>
</gene>
<name>RPOZ_BURA4</name>
<organism>
    <name type="scientific">Burkholderia ambifaria (strain MC40-6)</name>
    <dbReference type="NCBI Taxonomy" id="398577"/>
    <lineage>
        <taxon>Bacteria</taxon>
        <taxon>Pseudomonadati</taxon>
        <taxon>Pseudomonadota</taxon>
        <taxon>Betaproteobacteria</taxon>
        <taxon>Burkholderiales</taxon>
        <taxon>Burkholderiaceae</taxon>
        <taxon>Burkholderia</taxon>
        <taxon>Burkholderia cepacia complex</taxon>
    </lineage>
</organism>
<comment type="function">
    <text evidence="1">Promotes RNA polymerase assembly. Latches the N- and C-terminal regions of the beta' subunit thereby facilitating its interaction with the beta and alpha subunits.</text>
</comment>
<comment type="catalytic activity">
    <reaction evidence="1">
        <text>RNA(n) + a ribonucleoside 5'-triphosphate = RNA(n+1) + diphosphate</text>
        <dbReference type="Rhea" id="RHEA:21248"/>
        <dbReference type="Rhea" id="RHEA-COMP:14527"/>
        <dbReference type="Rhea" id="RHEA-COMP:17342"/>
        <dbReference type="ChEBI" id="CHEBI:33019"/>
        <dbReference type="ChEBI" id="CHEBI:61557"/>
        <dbReference type="ChEBI" id="CHEBI:140395"/>
        <dbReference type="EC" id="2.7.7.6"/>
    </reaction>
</comment>
<comment type="subunit">
    <text evidence="1">The RNAP catalytic core consists of 2 alpha, 1 beta, 1 beta' and 1 omega subunit. When a sigma factor is associated with the core the holoenzyme is formed, which can initiate transcription.</text>
</comment>
<comment type="similarity">
    <text evidence="1">Belongs to the RNA polymerase subunit omega family.</text>
</comment>
<sequence length="67" mass="7453">MARITVEDCLKQIPNRFELALAATYRARQLAQGHTPKIESRDKPTVVALREIASGHVGVEMLKKVPV</sequence>
<feature type="chain" id="PRO_1000121195" description="DNA-directed RNA polymerase subunit omega">
    <location>
        <begin position="1"/>
        <end position="67"/>
    </location>
</feature>
<protein>
    <recommendedName>
        <fullName evidence="1">DNA-directed RNA polymerase subunit omega</fullName>
        <shortName evidence="1">RNAP omega subunit</shortName>
        <ecNumber evidence="1">2.7.7.6</ecNumber>
    </recommendedName>
    <alternativeName>
        <fullName evidence="1">RNA polymerase omega subunit</fullName>
    </alternativeName>
    <alternativeName>
        <fullName evidence="1">Transcriptase subunit omega</fullName>
    </alternativeName>
</protein>
<keyword id="KW-0240">DNA-directed RNA polymerase</keyword>
<keyword id="KW-0548">Nucleotidyltransferase</keyword>
<keyword id="KW-0804">Transcription</keyword>
<keyword id="KW-0808">Transferase</keyword>
<evidence type="ECO:0000255" key="1">
    <source>
        <dbReference type="HAMAP-Rule" id="MF_00366"/>
    </source>
</evidence>
<reference key="1">
    <citation type="submission" date="2008-04" db="EMBL/GenBank/DDBJ databases">
        <title>Complete sequence of chromosome 1 of Burkholderia ambifaria MC40-6.</title>
        <authorList>
            <person name="Copeland A."/>
            <person name="Lucas S."/>
            <person name="Lapidus A."/>
            <person name="Glavina del Rio T."/>
            <person name="Dalin E."/>
            <person name="Tice H."/>
            <person name="Pitluck S."/>
            <person name="Chain P."/>
            <person name="Malfatti S."/>
            <person name="Shin M."/>
            <person name="Vergez L."/>
            <person name="Lang D."/>
            <person name="Schmutz J."/>
            <person name="Larimer F."/>
            <person name="Land M."/>
            <person name="Hauser L."/>
            <person name="Kyrpides N."/>
            <person name="Lykidis A."/>
            <person name="Ramette A."/>
            <person name="Konstantinidis K."/>
            <person name="Tiedje J."/>
            <person name="Richardson P."/>
        </authorList>
    </citation>
    <scope>NUCLEOTIDE SEQUENCE [LARGE SCALE GENOMIC DNA]</scope>
    <source>
        <strain>MC40-6</strain>
    </source>
</reference>
<accession>B1YUY0</accession>
<dbReference type="EC" id="2.7.7.6" evidence="1"/>
<dbReference type="EMBL" id="CP001025">
    <property type="protein sequence ID" value="ACB63363.1"/>
    <property type="molecule type" value="Genomic_DNA"/>
</dbReference>
<dbReference type="RefSeq" id="WP_006756189.1">
    <property type="nucleotide sequence ID" value="NC_010551.1"/>
</dbReference>
<dbReference type="SMR" id="B1YUY0"/>
<dbReference type="KEGG" id="bac:BamMC406_0872"/>
<dbReference type="HOGENOM" id="CLU_125406_5_2_4"/>
<dbReference type="OrthoDB" id="9796300at2"/>
<dbReference type="Proteomes" id="UP000001680">
    <property type="component" value="Chromosome 1"/>
</dbReference>
<dbReference type="GO" id="GO:0000428">
    <property type="term" value="C:DNA-directed RNA polymerase complex"/>
    <property type="evidence" value="ECO:0007669"/>
    <property type="project" value="UniProtKB-KW"/>
</dbReference>
<dbReference type="GO" id="GO:0003677">
    <property type="term" value="F:DNA binding"/>
    <property type="evidence" value="ECO:0007669"/>
    <property type="project" value="UniProtKB-UniRule"/>
</dbReference>
<dbReference type="GO" id="GO:0003899">
    <property type="term" value="F:DNA-directed RNA polymerase activity"/>
    <property type="evidence" value="ECO:0007669"/>
    <property type="project" value="UniProtKB-UniRule"/>
</dbReference>
<dbReference type="GO" id="GO:0006351">
    <property type="term" value="P:DNA-templated transcription"/>
    <property type="evidence" value="ECO:0007669"/>
    <property type="project" value="UniProtKB-UniRule"/>
</dbReference>
<dbReference type="Gene3D" id="3.90.940.10">
    <property type="match status" value="1"/>
</dbReference>
<dbReference type="HAMAP" id="MF_00366">
    <property type="entry name" value="RNApol_bact_RpoZ"/>
    <property type="match status" value="1"/>
</dbReference>
<dbReference type="InterPro" id="IPR003716">
    <property type="entry name" value="DNA-dir_RNA_pol_omega"/>
</dbReference>
<dbReference type="InterPro" id="IPR006110">
    <property type="entry name" value="Pol_omega/Rpo6/RPB6"/>
</dbReference>
<dbReference type="InterPro" id="IPR036161">
    <property type="entry name" value="RPB6/omega-like_sf"/>
</dbReference>
<dbReference type="NCBIfam" id="TIGR00690">
    <property type="entry name" value="rpoZ"/>
    <property type="match status" value="1"/>
</dbReference>
<dbReference type="PANTHER" id="PTHR34476">
    <property type="entry name" value="DNA-DIRECTED RNA POLYMERASE SUBUNIT OMEGA"/>
    <property type="match status" value="1"/>
</dbReference>
<dbReference type="PANTHER" id="PTHR34476:SF1">
    <property type="entry name" value="DNA-DIRECTED RNA POLYMERASE SUBUNIT OMEGA"/>
    <property type="match status" value="1"/>
</dbReference>
<dbReference type="Pfam" id="PF01192">
    <property type="entry name" value="RNA_pol_Rpb6"/>
    <property type="match status" value="1"/>
</dbReference>
<dbReference type="SMART" id="SM01409">
    <property type="entry name" value="RNA_pol_Rpb6"/>
    <property type="match status" value="1"/>
</dbReference>
<dbReference type="SUPFAM" id="SSF63562">
    <property type="entry name" value="RPB6/omega subunit-like"/>
    <property type="match status" value="1"/>
</dbReference>